<feature type="transit peptide" description="Mitochondrion" evidence="1">
    <location>
        <begin position="1"/>
        <end position="19"/>
    </location>
</feature>
<feature type="chain" id="PRO_0000193361" description="2-methoxy-6-polyprenyl-1,4-benzoquinol methylase, mitochondrial">
    <location>
        <begin position="20"/>
        <end position="307"/>
    </location>
</feature>
<feature type="binding site" evidence="1 6">
    <location>
        <position position="122"/>
    </location>
    <ligand>
        <name>S-adenosyl-L-methionine</name>
        <dbReference type="ChEBI" id="CHEBI:59789"/>
    </ligand>
</feature>
<feature type="binding site" evidence="1 6">
    <location>
        <position position="148"/>
    </location>
    <ligand>
        <name>S-adenosyl-L-methionine</name>
        <dbReference type="ChEBI" id="CHEBI:59789"/>
    </ligand>
</feature>
<feature type="binding site" evidence="1 6">
    <location>
        <begin position="179"/>
        <end position="180"/>
    </location>
    <ligand>
        <name>S-adenosyl-L-methionine</name>
        <dbReference type="ChEBI" id="CHEBI:59789"/>
    </ligand>
</feature>
<feature type="binding site" evidence="1 6">
    <location>
        <position position="197"/>
    </location>
    <ligand>
        <name>S-adenosyl-L-methionine</name>
        <dbReference type="ChEBI" id="CHEBI:59789"/>
    </ligand>
</feature>
<feature type="helix" evidence="16">
    <location>
        <begin position="74"/>
        <end position="86"/>
    </location>
</feature>
<feature type="turn" evidence="16">
    <location>
        <begin position="87"/>
        <end position="89"/>
    </location>
</feature>
<feature type="helix" evidence="16">
    <location>
        <begin position="90"/>
        <end position="101"/>
    </location>
</feature>
<feature type="strand" evidence="16">
    <location>
        <begin position="114"/>
        <end position="119"/>
    </location>
</feature>
<feature type="helix" evidence="16">
    <location>
        <begin position="124"/>
        <end position="137"/>
    </location>
</feature>
<feature type="strand" evidence="16">
    <location>
        <begin position="143"/>
        <end position="149"/>
    </location>
</feature>
<feature type="helix" evidence="16">
    <location>
        <begin position="151"/>
        <end position="164"/>
    </location>
</feature>
<feature type="strand" evidence="15">
    <location>
        <begin position="166"/>
        <end position="169"/>
    </location>
</feature>
<feature type="strand" evidence="16">
    <location>
        <begin position="173"/>
        <end position="177"/>
    </location>
</feature>
<feature type="turn" evidence="16">
    <location>
        <begin position="180"/>
        <end position="182"/>
    </location>
</feature>
<feature type="strand" evidence="16">
    <location>
        <begin position="191"/>
        <end position="198"/>
    </location>
</feature>
<feature type="helix" evidence="16">
    <location>
        <begin position="200"/>
        <end position="202"/>
    </location>
</feature>
<feature type="helix" evidence="16">
    <location>
        <begin position="206"/>
        <end position="216"/>
    </location>
</feature>
<feature type="strand" evidence="16">
    <location>
        <begin position="217"/>
        <end position="228"/>
    </location>
</feature>
<feature type="helix" evidence="16">
    <location>
        <begin position="234"/>
        <end position="255"/>
    </location>
</feature>
<feature type="helix" evidence="16">
    <location>
        <begin position="258"/>
        <end position="270"/>
    </location>
</feature>
<feature type="helix" evidence="16">
    <location>
        <begin position="274"/>
        <end position="283"/>
    </location>
</feature>
<feature type="strand" evidence="16">
    <location>
        <begin position="286"/>
        <end position="294"/>
    </location>
</feature>
<feature type="helix" evidence="16">
    <location>
        <begin position="295"/>
        <end position="297"/>
    </location>
</feature>
<feature type="strand" evidence="16">
    <location>
        <begin position="299"/>
        <end position="306"/>
    </location>
</feature>
<evidence type="ECO:0000255" key="1">
    <source>
        <dbReference type="HAMAP-Rule" id="MF_03191"/>
    </source>
</evidence>
<evidence type="ECO:0000269" key="2">
    <source>
    </source>
</evidence>
<evidence type="ECO:0000269" key="3">
    <source>
    </source>
</evidence>
<evidence type="ECO:0000269" key="4">
    <source>
    </source>
</evidence>
<evidence type="ECO:0000269" key="5">
    <source>
    </source>
</evidence>
<evidence type="ECO:0000269" key="6">
    <source>
    </source>
</evidence>
<evidence type="ECO:0000269" key="7">
    <source>
    </source>
</evidence>
<evidence type="ECO:0000269" key="8">
    <source>
    </source>
</evidence>
<evidence type="ECO:0000303" key="9">
    <source>
    </source>
</evidence>
<evidence type="ECO:0000303" key="10">
    <source>
    </source>
</evidence>
<evidence type="ECO:0000305" key="11"/>
<evidence type="ECO:0000305" key="12">
    <source>
    </source>
</evidence>
<evidence type="ECO:0000305" key="13">
    <source>
    </source>
</evidence>
<evidence type="ECO:0000312" key="14">
    <source>
        <dbReference type="SGD" id="S000004578"/>
    </source>
</evidence>
<evidence type="ECO:0007829" key="15">
    <source>
        <dbReference type="PDB" id="4OBW"/>
    </source>
</evidence>
<evidence type="ECO:0007829" key="16">
    <source>
        <dbReference type="PDB" id="4OBX"/>
    </source>
</evidence>
<comment type="function">
    <text evidence="1 7">Methyltransferase required for the conversion of 2-hexaprenyl-6-methoxy-1,4-benzoquinol (DDMQH2) to 2-hexaprenyl-3-methyl-6-methoxy-1,4-benzoquinol (DMQH2).</text>
</comment>
<comment type="catalytic activity">
    <reaction evidence="1 4 8">
        <text>2-methoxy-6-(all-trans-hexaprenyl)benzene-1,4-diol + S-adenosyl-L-methionine = 5-methoxy-2-methyl-3-(all-trans-hexaprenyl)benzene-1,4-diol + S-adenosyl-L-homocysteine + H(+)</text>
        <dbReference type="Rhea" id="RHEA:44752"/>
        <dbReference type="ChEBI" id="CHEBI:15378"/>
        <dbReference type="ChEBI" id="CHEBI:57856"/>
        <dbReference type="ChEBI" id="CHEBI:59789"/>
        <dbReference type="ChEBI" id="CHEBI:61472"/>
        <dbReference type="ChEBI" id="CHEBI:61473"/>
        <dbReference type="EC" id="2.1.1.201"/>
    </reaction>
</comment>
<comment type="pathway">
    <text evidence="1 12 13">Cofactor biosynthesis; ubiquinone biosynthesis.</text>
</comment>
<comment type="subunit">
    <text evidence="1 5">Component of a multi-subunit COQ enzyme complex, composed of at least COQ3, COQ4, COQ5, COQ6, COQ7 and COQ9. Interacts with COQ3.</text>
</comment>
<comment type="subcellular location">
    <subcellularLocation>
        <location evidence="1 2 4 8">Mitochondrion inner membrane</location>
        <topology evidence="1 4">Peripheral membrane protein</topology>
        <orientation evidence="1 4 7">Matrix side</orientation>
    </subcellularLocation>
</comment>
<comment type="miscellaneous">
    <text evidence="3">Present with 8100 molecules/cell in log phase SD medium.</text>
</comment>
<comment type="similarity">
    <text evidence="1 11">Belongs to the class I-like SAM-binding methyltransferase superfamily. MenG/UbiE family.</text>
</comment>
<organism>
    <name type="scientific">Saccharomyces cerevisiae (strain ATCC 204508 / S288c)</name>
    <name type="common">Baker's yeast</name>
    <dbReference type="NCBI Taxonomy" id="559292"/>
    <lineage>
        <taxon>Eukaryota</taxon>
        <taxon>Fungi</taxon>
        <taxon>Dikarya</taxon>
        <taxon>Ascomycota</taxon>
        <taxon>Saccharomycotina</taxon>
        <taxon>Saccharomycetes</taxon>
        <taxon>Saccharomycetales</taxon>
        <taxon>Saccharomycetaceae</taxon>
        <taxon>Saccharomyces</taxon>
    </lineage>
</organism>
<dbReference type="EC" id="2.1.1.201" evidence="1 4 8"/>
<dbReference type="EMBL" id="Z49210">
    <property type="protein sequence ID" value="CAA89108.1"/>
    <property type="molecule type" value="Genomic_DNA"/>
</dbReference>
<dbReference type="EMBL" id="AY693194">
    <property type="protein sequence ID" value="AAT93213.1"/>
    <property type="molecule type" value="Genomic_DNA"/>
</dbReference>
<dbReference type="EMBL" id="BK006946">
    <property type="protein sequence ID" value="DAA09788.1"/>
    <property type="molecule type" value="Genomic_DNA"/>
</dbReference>
<dbReference type="PIR" id="S53962">
    <property type="entry name" value="S53962"/>
</dbReference>
<dbReference type="RefSeq" id="NP_013597.1">
    <property type="nucleotide sequence ID" value="NM_001182472.1"/>
</dbReference>
<dbReference type="PDB" id="4OBW">
    <property type="method" value="X-ray"/>
    <property type="resolution" value="2.40 A"/>
    <property type="chains" value="A/B/C/D=61-307"/>
</dbReference>
<dbReference type="PDB" id="4OBX">
    <property type="method" value="X-ray"/>
    <property type="resolution" value="2.20 A"/>
    <property type="chains" value="A/B/C/D=61-307"/>
</dbReference>
<dbReference type="PDBsum" id="4OBW"/>
<dbReference type="PDBsum" id="4OBX"/>
<dbReference type="SMR" id="P49017"/>
<dbReference type="BioGRID" id="35094">
    <property type="interactions" value="201"/>
</dbReference>
<dbReference type="ComplexPortal" id="CPX-1155">
    <property type="entry name" value="CoQ biosynthetic complex"/>
</dbReference>
<dbReference type="DIP" id="DIP-1639N"/>
<dbReference type="FunCoup" id="P49017">
    <property type="interactions" value="592"/>
</dbReference>
<dbReference type="IntAct" id="P49017">
    <property type="interactions" value="16"/>
</dbReference>
<dbReference type="MINT" id="P49017"/>
<dbReference type="STRING" id="4932.YML110C"/>
<dbReference type="iPTMnet" id="P49017"/>
<dbReference type="PaxDb" id="4932-YML110C"/>
<dbReference type="PeptideAtlas" id="P49017"/>
<dbReference type="EnsemblFungi" id="YML110C_mRNA">
    <property type="protein sequence ID" value="YML110C"/>
    <property type="gene ID" value="YML110C"/>
</dbReference>
<dbReference type="GeneID" id="854930"/>
<dbReference type="KEGG" id="sce:YML110C"/>
<dbReference type="AGR" id="SGD:S000004578"/>
<dbReference type="SGD" id="S000004578">
    <property type="gene designation" value="COQ5"/>
</dbReference>
<dbReference type="VEuPathDB" id="FungiDB:YML110C"/>
<dbReference type="eggNOG" id="KOG1540">
    <property type="taxonomic scope" value="Eukaryota"/>
</dbReference>
<dbReference type="GeneTree" id="ENSGT00390000001654"/>
<dbReference type="HOGENOM" id="CLU_037990_0_1_1"/>
<dbReference type="InParanoid" id="P49017"/>
<dbReference type="OMA" id="MNDVMSM"/>
<dbReference type="OrthoDB" id="6329284at2759"/>
<dbReference type="BioCyc" id="MetaCyc:YML110C-MONOMER"/>
<dbReference type="BioCyc" id="YEAST:YML110C-MONOMER"/>
<dbReference type="BRENDA" id="2.1.1.201">
    <property type="organism ID" value="984"/>
</dbReference>
<dbReference type="Reactome" id="R-SCE-2142789">
    <property type="pathway name" value="Ubiquinol biosynthesis"/>
</dbReference>
<dbReference type="UniPathway" id="UPA00232"/>
<dbReference type="BioGRID-ORCS" id="854930">
    <property type="hits" value="7 hits in 10 CRISPR screens"/>
</dbReference>
<dbReference type="EvolutionaryTrace" id="P49017"/>
<dbReference type="PRO" id="PR:P49017"/>
<dbReference type="Proteomes" id="UP000002311">
    <property type="component" value="Chromosome XIII"/>
</dbReference>
<dbReference type="RNAct" id="P49017">
    <property type="molecule type" value="protein"/>
</dbReference>
<dbReference type="GO" id="GO:0031314">
    <property type="term" value="C:extrinsic component of mitochondrial inner membrane"/>
    <property type="evidence" value="ECO:0007669"/>
    <property type="project" value="UniProtKB-UniRule"/>
</dbReference>
<dbReference type="GO" id="GO:0005743">
    <property type="term" value="C:mitochondrial inner membrane"/>
    <property type="evidence" value="ECO:0000314"/>
    <property type="project" value="ComplexPortal"/>
</dbReference>
<dbReference type="GO" id="GO:0005759">
    <property type="term" value="C:mitochondrial matrix"/>
    <property type="evidence" value="ECO:0000314"/>
    <property type="project" value="SGD"/>
</dbReference>
<dbReference type="GO" id="GO:0005739">
    <property type="term" value="C:mitochondrion"/>
    <property type="evidence" value="ECO:0007005"/>
    <property type="project" value="SGD"/>
</dbReference>
<dbReference type="GO" id="GO:0008425">
    <property type="term" value="F:2-methoxy-6-polyprenyl-1,4-benzoquinol methyltransferase activity"/>
    <property type="evidence" value="ECO:0000315"/>
    <property type="project" value="UniProtKB"/>
</dbReference>
<dbReference type="GO" id="GO:0009060">
    <property type="term" value="P:aerobic respiration"/>
    <property type="evidence" value="ECO:0000315"/>
    <property type="project" value="SGD"/>
</dbReference>
<dbReference type="GO" id="GO:0032259">
    <property type="term" value="P:methylation"/>
    <property type="evidence" value="ECO:0000315"/>
    <property type="project" value="UniProtKB"/>
</dbReference>
<dbReference type="GO" id="GO:0006744">
    <property type="term" value="P:ubiquinone biosynthetic process"/>
    <property type="evidence" value="ECO:0000315"/>
    <property type="project" value="SGD"/>
</dbReference>
<dbReference type="CDD" id="cd02440">
    <property type="entry name" value="AdoMet_MTases"/>
    <property type="match status" value="1"/>
</dbReference>
<dbReference type="FunFam" id="3.40.50.150:FF:000133">
    <property type="entry name" value="2-methoxy-6-polyprenyl-1,4-benzoquinol methylase, mitochondrial"/>
    <property type="match status" value="1"/>
</dbReference>
<dbReference type="Gene3D" id="3.40.50.150">
    <property type="entry name" value="Vaccinia Virus protein VP39"/>
    <property type="match status" value="1"/>
</dbReference>
<dbReference type="HAMAP" id="MF_01813">
    <property type="entry name" value="MenG_UbiE_methyltr"/>
    <property type="match status" value="1"/>
</dbReference>
<dbReference type="InterPro" id="IPR029063">
    <property type="entry name" value="SAM-dependent_MTases_sf"/>
</dbReference>
<dbReference type="InterPro" id="IPR004033">
    <property type="entry name" value="UbiE/COQ5_MeTrFase"/>
</dbReference>
<dbReference type="InterPro" id="IPR023576">
    <property type="entry name" value="UbiE/COQ5_MeTrFase_CS"/>
</dbReference>
<dbReference type="NCBIfam" id="TIGR01934">
    <property type="entry name" value="MenG_MenH_UbiE"/>
    <property type="match status" value="1"/>
</dbReference>
<dbReference type="PANTHER" id="PTHR43591:SF24">
    <property type="entry name" value="2-METHOXY-6-POLYPRENYL-1,4-BENZOQUINOL METHYLASE, MITOCHONDRIAL"/>
    <property type="match status" value="1"/>
</dbReference>
<dbReference type="PANTHER" id="PTHR43591">
    <property type="entry name" value="METHYLTRANSFERASE"/>
    <property type="match status" value="1"/>
</dbReference>
<dbReference type="Pfam" id="PF01209">
    <property type="entry name" value="Ubie_methyltran"/>
    <property type="match status" value="1"/>
</dbReference>
<dbReference type="SUPFAM" id="SSF53335">
    <property type="entry name" value="S-adenosyl-L-methionine-dependent methyltransferases"/>
    <property type="match status" value="1"/>
</dbReference>
<dbReference type="PROSITE" id="PS51608">
    <property type="entry name" value="SAM_MT_UBIE"/>
    <property type="match status" value="1"/>
</dbReference>
<dbReference type="PROSITE" id="PS01183">
    <property type="entry name" value="UBIE_1"/>
    <property type="match status" value="1"/>
</dbReference>
<dbReference type="PROSITE" id="PS01184">
    <property type="entry name" value="UBIE_2"/>
    <property type="match status" value="1"/>
</dbReference>
<accession>P49017</accession>
<accession>D6W0H4</accession>
<sequence length="307" mass="34685">MLISSRIVRSSLVNVPLRLSRCFTQAHRACKEEEVNSPLSSAAEQPEQKYTHFGSKTVLKSTKQKLVGDVFSSVANRYDLMNDVMSLGIHRLWKDHFINKLDAGKRPNSTTPLNFIDVAGGSGDIAFGLLDHAESKFGDTESTMDIVDINPDMLKEGEKRAMEQGKYFKDPRVRFLVSNGEKLEEIDSDSKDIYTVSFGIRNFTDIQKGLNTAYRVLKPGGIFYCLEFSKIENPLMDFAYQQWAKVLPVMGSMIANDYDSYQYLVESIERFPDQETFKSMIEKAGFKSAGYESLTFGICAIHWGIKV</sequence>
<name>COQ5_YEAST</name>
<proteinExistence type="evidence at protein level"/>
<reference key="1">
    <citation type="journal article" date="1997" name="Nature">
        <title>The nucleotide sequence of Saccharomyces cerevisiae chromosome XIII.</title>
        <authorList>
            <person name="Bowman S."/>
            <person name="Churcher C.M."/>
            <person name="Badcock K."/>
            <person name="Brown D."/>
            <person name="Chillingworth T."/>
            <person name="Connor R."/>
            <person name="Dedman K."/>
            <person name="Devlin K."/>
            <person name="Gentles S."/>
            <person name="Hamlin N."/>
            <person name="Hunt S."/>
            <person name="Jagels K."/>
            <person name="Lye G."/>
            <person name="Moule S."/>
            <person name="Odell C."/>
            <person name="Pearson D."/>
            <person name="Rajandream M.A."/>
            <person name="Rice P."/>
            <person name="Skelton J."/>
            <person name="Walsh S.V."/>
            <person name="Whitehead S."/>
            <person name="Barrell B.G."/>
        </authorList>
    </citation>
    <scope>NUCLEOTIDE SEQUENCE [LARGE SCALE GENOMIC DNA]</scope>
    <source>
        <strain>ATCC 204508 / S288c</strain>
    </source>
</reference>
<reference key="2">
    <citation type="journal article" date="2014" name="G3 (Bethesda)">
        <title>The reference genome sequence of Saccharomyces cerevisiae: Then and now.</title>
        <authorList>
            <person name="Engel S.R."/>
            <person name="Dietrich F.S."/>
            <person name="Fisk D.G."/>
            <person name="Binkley G."/>
            <person name="Balakrishnan R."/>
            <person name="Costanzo M.C."/>
            <person name="Dwight S.S."/>
            <person name="Hitz B.C."/>
            <person name="Karra K."/>
            <person name="Nash R.S."/>
            <person name="Weng S."/>
            <person name="Wong E.D."/>
            <person name="Lloyd P."/>
            <person name="Skrzypek M.S."/>
            <person name="Miyasato S.R."/>
            <person name="Simison M."/>
            <person name="Cherry J.M."/>
        </authorList>
    </citation>
    <scope>GENOME REANNOTATION</scope>
    <source>
        <strain>ATCC 204508 / S288c</strain>
    </source>
</reference>
<reference key="3">
    <citation type="journal article" date="2007" name="Genome Res.">
        <title>Approaching a complete repository of sequence-verified protein-encoding clones for Saccharomyces cerevisiae.</title>
        <authorList>
            <person name="Hu Y."/>
            <person name="Rolfs A."/>
            <person name="Bhullar B."/>
            <person name="Murthy T.V.S."/>
            <person name="Zhu C."/>
            <person name="Berger M.F."/>
            <person name="Camargo A.A."/>
            <person name="Kelley F."/>
            <person name="McCarron S."/>
            <person name="Jepson D."/>
            <person name="Richardson A."/>
            <person name="Raphael J."/>
            <person name="Moreira D."/>
            <person name="Taycher E."/>
            <person name="Zuo D."/>
            <person name="Mohr S."/>
            <person name="Kane M.F."/>
            <person name="Williamson J."/>
            <person name="Simpson A.J.G."/>
            <person name="Bulyk M.L."/>
            <person name="Harlow E."/>
            <person name="Marsischky G."/>
            <person name="Kolodner R.D."/>
            <person name="LaBaer J."/>
        </authorList>
    </citation>
    <scope>NUCLEOTIDE SEQUENCE [GENOMIC DNA]</scope>
    <source>
        <strain>ATCC 204508 / S288c</strain>
    </source>
</reference>
<reference key="4">
    <citation type="journal article" date="1997" name="J. Biol. Chem.">
        <title>The COQ5 gene encodes a yeast mitochondrial protein necessary for ubiquinone biosynthesis and the assembly of the respiratory chain.</title>
        <authorList>
            <person name="Dibrov E."/>
            <person name="Robinson K.M."/>
            <person name="Lemire B.D."/>
        </authorList>
    </citation>
    <scope>FUNCTION</scope>
    <scope>SUBCELLULAR LOCATION</scope>
</reference>
<reference key="5">
    <citation type="journal article" date="1997" name="J. Biol. Chem.">
        <title>Characterization of the COQ5 gene from Saccharomyces cerevisiae. Evidence for a C-methyltransferase in ubiquinone biosynthesis.</title>
        <authorList>
            <person name="Barkovich R.J."/>
            <person name="Shtanko A."/>
            <person name="Shepherd J.A."/>
            <person name="Lee P.T."/>
            <person name="Myles D.C."/>
            <person name="Tzagoloff A."/>
            <person name="Clarke C.F."/>
        </authorList>
    </citation>
    <scope>CATALYTIC ACTIVITY</scope>
    <scope>SUBCELLULAR LOCATION</scope>
</reference>
<reference key="6">
    <citation type="journal article" date="2003" name="Nature">
        <title>Global analysis of protein localization in budding yeast.</title>
        <authorList>
            <person name="Huh W.-K."/>
            <person name="Falvo J.V."/>
            <person name="Gerke L.C."/>
            <person name="Carroll A.S."/>
            <person name="Howson R.W."/>
            <person name="Weissman J.S."/>
            <person name="O'Shea E.K."/>
        </authorList>
    </citation>
    <scope>SUBCELLULAR LOCATION [LARGE SCALE ANALYSIS]</scope>
</reference>
<reference key="7">
    <citation type="journal article" date="2003" name="Nature">
        <title>Global analysis of protein expression in yeast.</title>
        <authorList>
            <person name="Ghaemmaghami S."/>
            <person name="Huh W.-K."/>
            <person name="Bower K."/>
            <person name="Howson R.W."/>
            <person name="Belle A."/>
            <person name="Dephoure N."/>
            <person name="O'Shea E.K."/>
            <person name="Weissman J.S."/>
        </authorList>
    </citation>
    <scope>LEVEL OF PROTEIN EXPRESSION [LARGE SCALE ANALYSIS]</scope>
</reference>
<reference key="8">
    <citation type="journal article" date="2004" name="J. Biol. Chem.">
        <title>Yeast Coq5 C-methyltransferase is required for stability of other polypeptides involved in coenzyme Q biosynthesis.</title>
        <authorList>
            <person name="Baba S.W."/>
            <person name="Belogrudov G.I."/>
            <person name="Lee J.C."/>
            <person name="Lee P.T."/>
            <person name="Strahan J."/>
            <person name="Shepherd J.N."/>
            <person name="Clarke C.F."/>
        </authorList>
    </citation>
    <scope>CATALYTIC ACTIVITY</scope>
    <scope>SUBCELLULAR LOCATION</scope>
</reference>
<reference key="9">
    <citation type="journal article" date="2014" name="Biochim. Biophys. Acta">
        <title>Coenzyme Q supplementation or over-expression of the yeast Coq8 putative kinase stabilizes multi-subunit Coq polypeptide complexes in yeast coq null mutants.</title>
        <authorList>
            <person name="He C.H."/>
            <person name="Xie L.X."/>
            <person name="Allan C.M."/>
            <person name="Tran U.C."/>
            <person name="Clarke C.F."/>
        </authorList>
    </citation>
    <scope>SUBUNIT</scope>
</reference>
<reference key="10">
    <citation type="journal article" date="2014" name="Acta Crystallogr. D">
        <title>Crystal structures and catalytic mechanism of the C-methyltransferase Coq5 provide insights into a key step of the yeast coenzyme Q synthesis pathway.</title>
        <authorList>
            <person name="Dai Y.N."/>
            <person name="Zhou K."/>
            <person name="Cao D.D."/>
            <person name="Jiang Y.L."/>
            <person name="Meng F."/>
            <person name="Chi C.B."/>
            <person name="Ren Y.M."/>
            <person name="Chen Y."/>
            <person name="Zhou C.Z."/>
        </authorList>
    </citation>
    <scope>X-RAY CRYSTALLOGRAPHY (2.20 ANGSTROMS) OF 61-307</scope>
</reference>
<keyword id="KW-0002">3D-structure</keyword>
<keyword id="KW-0472">Membrane</keyword>
<keyword id="KW-0489">Methyltransferase</keyword>
<keyword id="KW-0496">Mitochondrion</keyword>
<keyword id="KW-0999">Mitochondrion inner membrane</keyword>
<keyword id="KW-1185">Reference proteome</keyword>
<keyword id="KW-0949">S-adenosyl-L-methionine</keyword>
<keyword id="KW-0808">Transferase</keyword>
<keyword id="KW-0809">Transit peptide</keyword>
<keyword id="KW-0831">Ubiquinone biosynthesis</keyword>
<gene>
    <name evidence="1 9 10" type="primary">COQ5</name>
    <name type="synonym">DBI56</name>
    <name evidence="14" type="ordered locus">YML110C</name>
    <name type="ORF">YM8339.09C</name>
</gene>
<protein>
    <recommendedName>
        <fullName evidence="1 10">2-methoxy-6-polyprenyl-1,4-benzoquinol methylase, mitochondrial</fullName>
        <ecNumber evidence="1 4 8">2.1.1.201</ecNumber>
    </recommendedName>
    <alternativeName>
        <fullName evidence="9">2-hexaprenyl-6-methoxy-1,4-benzoquinol methyltransferase</fullName>
    </alternativeName>
    <alternativeName>
        <fullName evidence="1 10">Ubiquinone biosynthesis methyltransferase COQ5</fullName>
    </alternativeName>
</protein>